<protein>
    <recommendedName>
        <fullName evidence="1">Protein TusB</fullName>
    </recommendedName>
    <alternativeName>
        <fullName evidence="1">tRNA 2-thiouridine synthesizing protein B</fullName>
    </alternativeName>
</protein>
<gene>
    <name evidence="1" type="primary">tusB</name>
    <name type="ordered locus">UTI89_C3845</name>
</gene>
<sequence>MLHTLHRSPWLTDFAALLRLLSEGDELLLLQDGVTAAVDGNRYLESLRNAPIKVYALNEDLIARGLTGRISNDIIPIDYTDFVRLTVKHSSQMAW</sequence>
<reference key="1">
    <citation type="journal article" date="2006" name="Proc. Natl. Acad. Sci. U.S.A.">
        <title>Identification of genes subject to positive selection in uropathogenic strains of Escherichia coli: a comparative genomics approach.</title>
        <authorList>
            <person name="Chen S.L."/>
            <person name="Hung C.-S."/>
            <person name="Xu J."/>
            <person name="Reigstad C.S."/>
            <person name="Magrini V."/>
            <person name="Sabo A."/>
            <person name="Blasiar D."/>
            <person name="Bieri T."/>
            <person name="Meyer R.R."/>
            <person name="Ozersky P."/>
            <person name="Armstrong J.R."/>
            <person name="Fulton R.S."/>
            <person name="Latreille J.P."/>
            <person name="Spieth J."/>
            <person name="Hooton T.M."/>
            <person name="Mardis E.R."/>
            <person name="Hultgren S.J."/>
            <person name="Gordon J.I."/>
        </authorList>
    </citation>
    <scope>NUCLEOTIDE SEQUENCE [LARGE SCALE GENOMIC DNA]</scope>
    <source>
        <strain>UTI89 / UPEC</strain>
    </source>
</reference>
<proteinExistence type="inferred from homology"/>
<dbReference type="EMBL" id="CP000243">
    <property type="protein sequence ID" value="ABE09274.1"/>
    <property type="molecule type" value="Genomic_DNA"/>
</dbReference>
<dbReference type="RefSeq" id="WP_000903381.1">
    <property type="nucleotide sequence ID" value="NZ_CP064825.1"/>
</dbReference>
<dbReference type="SMR" id="Q1R5U0"/>
<dbReference type="KEGG" id="eci:UTI89_C3845"/>
<dbReference type="HOGENOM" id="CLU_166087_2_1_6"/>
<dbReference type="Proteomes" id="UP000001952">
    <property type="component" value="Chromosome"/>
</dbReference>
<dbReference type="GO" id="GO:1990228">
    <property type="term" value="C:sulfurtransferase complex"/>
    <property type="evidence" value="ECO:0007669"/>
    <property type="project" value="TreeGrafter"/>
</dbReference>
<dbReference type="GO" id="GO:0002143">
    <property type="term" value="P:tRNA wobble position uridine thiolation"/>
    <property type="evidence" value="ECO:0007669"/>
    <property type="project" value="InterPro"/>
</dbReference>
<dbReference type="FunFam" id="3.40.1260.10:FF:000002">
    <property type="entry name" value="Sulfurtransferase TusB"/>
    <property type="match status" value="1"/>
</dbReference>
<dbReference type="Gene3D" id="3.40.1260.10">
    <property type="entry name" value="DsrEFH-like"/>
    <property type="match status" value="1"/>
</dbReference>
<dbReference type="HAMAP" id="MF_01564">
    <property type="entry name" value="Thiourid_synth_B"/>
    <property type="match status" value="1"/>
</dbReference>
<dbReference type="InterPro" id="IPR027396">
    <property type="entry name" value="DsrEFH-like"/>
</dbReference>
<dbReference type="InterPro" id="IPR023526">
    <property type="entry name" value="Sulphur_relay_TusB"/>
</dbReference>
<dbReference type="InterPro" id="IPR007215">
    <property type="entry name" value="Sulphur_relay_TusB/DsrH"/>
</dbReference>
<dbReference type="NCBIfam" id="NF010035">
    <property type="entry name" value="PRK13510.1"/>
    <property type="match status" value="1"/>
</dbReference>
<dbReference type="NCBIfam" id="TIGR03011">
    <property type="entry name" value="sulf_tusB_dsrH"/>
    <property type="match status" value="1"/>
</dbReference>
<dbReference type="PANTHER" id="PTHR37526">
    <property type="entry name" value="PROTEIN TUSB"/>
    <property type="match status" value="1"/>
</dbReference>
<dbReference type="PANTHER" id="PTHR37526:SF1">
    <property type="entry name" value="PROTEIN TUSB"/>
    <property type="match status" value="1"/>
</dbReference>
<dbReference type="Pfam" id="PF04077">
    <property type="entry name" value="DsrH"/>
    <property type="match status" value="1"/>
</dbReference>
<dbReference type="SUPFAM" id="SSF75169">
    <property type="entry name" value="DsrEFH-like"/>
    <property type="match status" value="1"/>
</dbReference>
<keyword id="KW-0963">Cytoplasm</keyword>
<keyword id="KW-0819">tRNA processing</keyword>
<accession>Q1R5U0</accession>
<evidence type="ECO:0000255" key="1">
    <source>
        <dbReference type="HAMAP-Rule" id="MF_01564"/>
    </source>
</evidence>
<comment type="function">
    <text evidence="1">Part of a sulfur-relay system required for 2-thiolation of 5-methylaminomethyl-2-thiouridine (mnm(5)s(2)U) at tRNA wobble positions.</text>
</comment>
<comment type="subunit">
    <text evidence="1">Heterohexamer, formed by a dimer of trimers. The hexameric TusBCD complex contains 2 copies each of TusB, TusC and TusD. The TusBCD complex interacts with TusE.</text>
</comment>
<comment type="subcellular location">
    <subcellularLocation>
        <location evidence="1">Cytoplasm</location>
    </subcellularLocation>
</comment>
<comment type="similarity">
    <text evidence="1">Belongs to the DsrH/TusB family.</text>
</comment>
<organism>
    <name type="scientific">Escherichia coli (strain UTI89 / UPEC)</name>
    <dbReference type="NCBI Taxonomy" id="364106"/>
    <lineage>
        <taxon>Bacteria</taxon>
        <taxon>Pseudomonadati</taxon>
        <taxon>Pseudomonadota</taxon>
        <taxon>Gammaproteobacteria</taxon>
        <taxon>Enterobacterales</taxon>
        <taxon>Enterobacteriaceae</taxon>
        <taxon>Escherichia</taxon>
    </lineage>
</organism>
<feature type="chain" id="PRO_1000069056" description="Protein TusB">
    <location>
        <begin position="1"/>
        <end position="95"/>
    </location>
</feature>
<name>TUSB_ECOUT</name>